<dbReference type="EC" id="2.5.1.9"/>
<dbReference type="EMBL" id="AE000516">
    <property type="protein sequence ID" value="AAK45721.1"/>
    <property type="molecule type" value="Genomic_DNA"/>
</dbReference>
<dbReference type="PIR" id="A70902">
    <property type="entry name" value="A70902"/>
</dbReference>
<dbReference type="RefSeq" id="WP_003407318.1">
    <property type="nucleotide sequence ID" value="NZ_KK341227.1"/>
</dbReference>
<dbReference type="SMR" id="P9WK34"/>
<dbReference type="KEGG" id="mtc:MT1456"/>
<dbReference type="PATRIC" id="fig|83331.31.peg.1564"/>
<dbReference type="HOGENOM" id="CLU_034388_2_0_11"/>
<dbReference type="UniPathway" id="UPA00275">
    <property type="reaction ID" value="UER00405"/>
</dbReference>
<dbReference type="Proteomes" id="UP000001020">
    <property type="component" value="Chromosome"/>
</dbReference>
<dbReference type="GO" id="GO:0004746">
    <property type="term" value="F:riboflavin synthase activity"/>
    <property type="evidence" value="ECO:0007669"/>
    <property type="project" value="UniProtKB-EC"/>
</dbReference>
<dbReference type="GO" id="GO:0009231">
    <property type="term" value="P:riboflavin biosynthetic process"/>
    <property type="evidence" value="ECO:0007669"/>
    <property type="project" value="UniProtKB-UniPathway"/>
</dbReference>
<dbReference type="CDD" id="cd00402">
    <property type="entry name" value="Riboflavin_synthase_like"/>
    <property type="match status" value="1"/>
</dbReference>
<dbReference type="FunFam" id="2.40.30.20:FF:000003">
    <property type="entry name" value="Riboflavin synthase, alpha subunit"/>
    <property type="match status" value="1"/>
</dbReference>
<dbReference type="FunFam" id="2.40.30.20:FF:000004">
    <property type="entry name" value="Riboflavin synthase, alpha subunit"/>
    <property type="match status" value="1"/>
</dbReference>
<dbReference type="Gene3D" id="2.40.30.20">
    <property type="match status" value="2"/>
</dbReference>
<dbReference type="InterPro" id="IPR023366">
    <property type="entry name" value="ATP_synth_asu-like_sf"/>
</dbReference>
<dbReference type="InterPro" id="IPR001783">
    <property type="entry name" value="Lumazine-bd"/>
</dbReference>
<dbReference type="InterPro" id="IPR026017">
    <property type="entry name" value="Lumazine-bd_dom"/>
</dbReference>
<dbReference type="InterPro" id="IPR017938">
    <property type="entry name" value="Riboflavin_synthase-like_b-brl"/>
</dbReference>
<dbReference type="NCBIfam" id="NF006767">
    <property type="entry name" value="PRK09289.1"/>
    <property type="match status" value="1"/>
</dbReference>
<dbReference type="NCBIfam" id="NF009566">
    <property type="entry name" value="PRK13020.1"/>
    <property type="match status" value="1"/>
</dbReference>
<dbReference type="NCBIfam" id="TIGR00187">
    <property type="entry name" value="ribE"/>
    <property type="match status" value="1"/>
</dbReference>
<dbReference type="PANTHER" id="PTHR21098:SF12">
    <property type="entry name" value="RIBOFLAVIN SYNTHASE"/>
    <property type="match status" value="1"/>
</dbReference>
<dbReference type="PANTHER" id="PTHR21098">
    <property type="entry name" value="RIBOFLAVIN SYNTHASE ALPHA CHAIN"/>
    <property type="match status" value="1"/>
</dbReference>
<dbReference type="Pfam" id="PF00677">
    <property type="entry name" value="Lum_binding"/>
    <property type="match status" value="2"/>
</dbReference>
<dbReference type="PIRSF" id="PIRSF000498">
    <property type="entry name" value="Riboflavin_syn_A"/>
    <property type="match status" value="1"/>
</dbReference>
<dbReference type="SUPFAM" id="SSF63380">
    <property type="entry name" value="Riboflavin synthase domain-like"/>
    <property type="match status" value="2"/>
</dbReference>
<dbReference type="PROSITE" id="PS51177">
    <property type="entry name" value="LUMAZINE_BIND"/>
    <property type="match status" value="2"/>
</dbReference>
<gene>
    <name type="primary">ribE</name>
    <name type="synonym">ribC</name>
    <name type="ordered locus">MT1456</name>
</gene>
<evidence type="ECO:0000250" key="1"/>
<evidence type="ECO:0000250" key="2">
    <source>
        <dbReference type="UniProtKB" id="P0AFU8"/>
    </source>
</evidence>
<evidence type="ECO:0000250" key="3">
    <source>
        <dbReference type="UniProtKB" id="Q2YN92"/>
    </source>
</evidence>
<feature type="chain" id="PRO_0000427723" description="Riboflavin synthase">
    <location>
        <begin position="1"/>
        <end position="201"/>
    </location>
</feature>
<feature type="repeat" description="Lumazine-binding 1">
    <location>
        <begin position="1"/>
        <end position="97"/>
    </location>
</feature>
<feature type="repeat" description="Lumazine-binding 2">
    <location>
        <begin position="98"/>
        <end position="197"/>
    </location>
</feature>
<feature type="binding site" evidence="3">
    <location>
        <begin position="4"/>
        <end position="6"/>
    </location>
    <ligand>
        <name>2,4-dihydroxypteridine</name>
        <dbReference type="ChEBI" id="CHEBI:16489"/>
        <label>1</label>
    </ligand>
</feature>
<feature type="binding site" evidence="3">
    <location>
        <begin position="47"/>
        <end position="49"/>
    </location>
    <ligand>
        <name>2,4-dihydroxypteridine</name>
        <dbReference type="ChEBI" id="CHEBI:16489"/>
        <label>2</label>
        <note>ligand shared between two trimeric partners</note>
    </ligand>
</feature>
<feature type="binding site" evidence="2">
    <location>
        <begin position="62"/>
        <end position="67"/>
    </location>
    <ligand>
        <name>2,4-dihydroxypteridine</name>
        <dbReference type="ChEBI" id="CHEBI:16489"/>
        <label>2</label>
        <note>ligand shared between two trimeric partners</note>
    </ligand>
</feature>
<feature type="binding site" evidence="3">
    <location>
        <begin position="101"/>
        <end position="103"/>
    </location>
    <ligand>
        <name>2,4-dihydroxypteridine</name>
        <dbReference type="ChEBI" id="CHEBI:16489"/>
        <label>2</label>
        <note>ligand shared between two trimeric partners</note>
    </ligand>
</feature>
<feature type="binding site" description="in other chain" evidence="3">
    <location>
        <position position="136"/>
    </location>
    <ligand>
        <name>2,4-dihydroxypteridine</name>
        <dbReference type="ChEBI" id="CHEBI:16489"/>
        <label>2</label>
        <note>ligand shared between two trimeric partners</note>
    </ligand>
</feature>
<feature type="binding site" evidence="3">
    <location>
        <begin position="145"/>
        <end position="147"/>
    </location>
    <ligand>
        <name>2,4-dihydroxypteridine</name>
        <dbReference type="ChEBI" id="CHEBI:16489"/>
        <label>1</label>
    </ligand>
</feature>
<feature type="binding site" evidence="3">
    <location>
        <begin position="162"/>
        <end position="167"/>
    </location>
    <ligand>
        <name>2,4-dihydroxypteridine</name>
        <dbReference type="ChEBI" id="CHEBI:16489"/>
        <label>1</label>
    </ligand>
</feature>
<keyword id="KW-1185">Reference proteome</keyword>
<keyword id="KW-0677">Repeat</keyword>
<keyword id="KW-0686">Riboflavin biosynthesis</keyword>
<keyword id="KW-0808">Transferase</keyword>
<accession>P9WK34</accession>
<accession>L0T6K5</accession>
<accession>P65327</accession>
<accession>P71680</accession>
<sequence length="201" mass="21320">MFTGIVEERGEVTGREALVDAARLTIRGPMVTADAGHGDSIAVNGVCLTVVDVLPDGQFTADVMAETLNRSNLGELRPGSRVNLERAAALGSRLGGHIVQGHVDATGEIVARCPSEHWEVVRIEMPASVARYVVEKGSITVDGISLTVSGLGAEQRDWFEVSLIPTTRELTTLGSAAVGTRVNLEVDVVAKYVERLMRSAG</sequence>
<protein>
    <recommendedName>
        <fullName>Riboflavin synthase</fullName>
        <shortName>RS</shortName>
        <ecNumber>2.5.1.9</ecNumber>
    </recommendedName>
</protein>
<reference key="1">
    <citation type="journal article" date="2002" name="J. Bacteriol.">
        <title>Whole-genome comparison of Mycobacterium tuberculosis clinical and laboratory strains.</title>
        <authorList>
            <person name="Fleischmann R.D."/>
            <person name="Alland D."/>
            <person name="Eisen J.A."/>
            <person name="Carpenter L."/>
            <person name="White O."/>
            <person name="Peterson J.D."/>
            <person name="DeBoy R.T."/>
            <person name="Dodson R.J."/>
            <person name="Gwinn M.L."/>
            <person name="Haft D.H."/>
            <person name="Hickey E.K."/>
            <person name="Kolonay J.F."/>
            <person name="Nelson W.C."/>
            <person name="Umayam L.A."/>
            <person name="Ermolaeva M.D."/>
            <person name="Salzberg S.L."/>
            <person name="Delcher A."/>
            <person name="Utterback T.R."/>
            <person name="Weidman J.F."/>
            <person name="Khouri H.M."/>
            <person name="Gill J."/>
            <person name="Mikula A."/>
            <person name="Bishai W."/>
            <person name="Jacobs W.R. Jr."/>
            <person name="Venter J.C."/>
            <person name="Fraser C.M."/>
        </authorList>
    </citation>
    <scope>NUCLEOTIDE SEQUENCE [LARGE SCALE GENOMIC DNA]</scope>
    <source>
        <strain>CDC 1551 / Oshkosh</strain>
    </source>
</reference>
<proteinExistence type="inferred from homology"/>
<comment type="function">
    <text evidence="1">Catalyzes the dismutation of two molecules of 6,7-dimethyl-8-ribityllumazine, resulting in the formation of riboflavin and 5-amino-6-(D-ribitylamino)uracil.</text>
</comment>
<comment type="catalytic activity">
    <reaction>
        <text>2 6,7-dimethyl-8-(1-D-ribityl)lumazine + H(+) = 5-amino-6-(D-ribitylamino)uracil + riboflavin</text>
        <dbReference type="Rhea" id="RHEA:20772"/>
        <dbReference type="ChEBI" id="CHEBI:15378"/>
        <dbReference type="ChEBI" id="CHEBI:15934"/>
        <dbReference type="ChEBI" id="CHEBI:57986"/>
        <dbReference type="ChEBI" id="CHEBI:58201"/>
        <dbReference type="EC" id="2.5.1.9"/>
    </reaction>
</comment>
<comment type="pathway">
    <text>Cofactor biosynthesis; riboflavin biosynthesis; riboflavin from 2-hydroxy-3-oxobutyl phosphate and 5-amino-6-(D-ribitylamino)uracil: step 2/2.</text>
</comment>
<comment type="subunit">
    <text evidence="1">Homotrimer.</text>
</comment>
<organism>
    <name type="scientific">Mycobacterium tuberculosis (strain CDC 1551 / Oshkosh)</name>
    <dbReference type="NCBI Taxonomy" id="83331"/>
    <lineage>
        <taxon>Bacteria</taxon>
        <taxon>Bacillati</taxon>
        <taxon>Actinomycetota</taxon>
        <taxon>Actinomycetes</taxon>
        <taxon>Mycobacteriales</taxon>
        <taxon>Mycobacteriaceae</taxon>
        <taxon>Mycobacterium</taxon>
        <taxon>Mycobacterium tuberculosis complex</taxon>
    </lineage>
</organism>
<name>RISA_MYCTO</name>